<organism>
    <name type="scientific">Coxiella burnetii (strain Dugway 5J108-111)</name>
    <dbReference type="NCBI Taxonomy" id="434922"/>
    <lineage>
        <taxon>Bacteria</taxon>
        <taxon>Pseudomonadati</taxon>
        <taxon>Pseudomonadota</taxon>
        <taxon>Gammaproteobacteria</taxon>
        <taxon>Legionellales</taxon>
        <taxon>Coxiellaceae</taxon>
        <taxon>Coxiella</taxon>
    </lineage>
</organism>
<proteinExistence type="inferred from homology"/>
<keyword id="KW-0963">Cytoplasm</keyword>
<keyword id="KW-0255">Endonuclease</keyword>
<keyword id="KW-0378">Hydrolase</keyword>
<keyword id="KW-0464">Manganese</keyword>
<keyword id="KW-0479">Metal-binding</keyword>
<keyword id="KW-0540">Nuclease</keyword>
<name>RNH2_COXBN</name>
<dbReference type="EC" id="3.1.26.4" evidence="1"/>
<dbReference type="EMBL" id="CP000733">
    <property type="protein sequence ID" value="ABS76774.1"/>
    <property type="molecule type" value="Genomic_DNA"/>
</dbReference>
<dbReference type="RefSeq" id="WP_005770967.1">
    <property type="nucleotide sequence ID" value="NC_009727.1"/>
</dbReference>
<dbReference type="SMR" id="A9KGD3"/>
<dbReference type="KEGG" id="cbd:CBUD_1428"/>
<dbReference type="HOGENOM" id="CLU_036532_3_2_6"/>
<dbReference type="Proteomes" id="UP000008555">
    <property type="component" value="Chromosome"/>
</dbReference>
<dbReference type="GO" id="GO:0005737">
    <property type="term" value="C:cytoplasm"/>
    <property type="evidence" value="ECO:0007669"/>
    <property type="project" value="UniProtKB-SubCell"/>
</dbReference>
<dbReference type="GO" id="GO:0032299">
    <property type="term" value="C:ribonuclease H2 complex"/>
    <property type="evidence" value="ECO:0007669"/>
    <property type="project" value="TreeGrafter"/>
</dbReference>
<dbReference type="GO" id="GO:0030145">
    <property type="term" value="F:manganese ion binding"/>
    <property type="evidence" value="ECO:0007669"/>
    <property type="project" value="UniProtKB-UniRule"/>
</dbReference>
<dbReference type="GO" id="GO:0003723">
    <property type="term" value="F:RNA binding"/>
    <property type="evidence" value="ECO:0007669"/>
    <property type="project" value="InterPro"/>
</dbReference>
<dbReference type="GO" id="GO:0004523">
    <property type="term" value="F:RNA-DNA hybrid ribonuclease activity"/>
    <property type="evidence" value="ECO:0007669"/>
    <property type="project" value="UniProtKB-UniRule"/>
</dbReference>
<dbReference type="GO" id="GO:0043137">
    <property type="term" value="P:DNA replication, removal of RNA primer"/>
    <property type="evidence" value="ECO:0007669"/>
    <property type="project" value="TreeGrafter"/>
</dbReference>
<dbReference type="GO" id="GO:0006298">
    <property type="term" value="P:mismatch repair"/>
    <property type="evidence" value="ECO:0007669"/>
    <property type="project" value="TreeGrafter"/>
</dbReference>
<dbReference type="CDD" id="cd07182">
    <property type="entry name" value="RNase_HII_bacteria_HII_like"/>
    <property type="match status" value="1"/>
</dbReference>
<dbReference type="FunFam" id="3.30.420.10:FF:000006">
    <property type="entry name" value="Ribonuclease HII"/>
    <property type="match status" value="1"/>
</dbReference>
<dbReference type="Gene3D" id="3.30.420.10">
    <property type="entry name" value="Ribonuclease H-like superfamily/Ribonuclease H"/>
    <property type="match status" value="1"/>
</dbReference>
<dbReference type="HAMAP" id="MF_00052_B">
    <property type="entry name" value="RNase_HII_B"/>
    <property type="match status" value="1"/>
</dbReference>
<dbReference type="InterPro" id="IPR022898">
    <property type="entry name" value="RNase_HII"/>
</dbReference>
<dbReference type="InterPro" id="IPR001352">
    <property type="entry name" value="RNase_HII/HIII"/>
</dbReference>
<dbReference type="InterPro" id="IPR024567">
    <property type="entry name" value="RNase_HII/HIII_dom"/>
</dbReference>
<dbReference type="InterPro" id="IPR012337">
    <property type="entry name" value="RNaseH-like_sf"/>
</dbReference>
<dbReference type="InterPro" id="IPR036397">
    <property type="entry name" value="RNaseH_sf"/>
</dbReference>
<dbReference type="NCBIfam" id="NF000594">
    <property type="entry name" value="PRK00015.1-1"/>
    <property type="match status" value="1"/>
</dbReference>
<dbReference type="NCBIfam" id="NF000595">
    <property type="entry name" value="PRK00015.1-3"/>
    <property type="match status" value="1"/>
</dbReference>
<dbReference type="NCBIfam" id="NF000596">
    <property type="entry name" value="PRK00015.1-4"/>
    <property type="match status" value="1"/>
</dbReference>
<dbReference type="PANTHER" id="PTHR10954">
    <property type="entry name" value="RIBONUCLEASE H2 SUBUNIT A"/>
    <property type="match status" value="1"/>
</dbReference>
<dbReference type="PANTHER" id="PTHR10954:SF18">
    <property type="entry name" value="RIBONUCLEASE HII"/>
    <property type="match status" value="1"/>
</dbReference>
<dbReference type="Pfam" id="PF01351">
    <property type="entry name" value="RNase_HII"/>
    <property type="match status" value="1"/>
</dbReference>
<dbReference type="SUPFAM" id="SSF53098">
    <property type="entry name" value="Ribonuclease H-like"/>
    <property type="match status" value="1"/>
</dbReference>
<dbReference type="PROSITE" id="PS51975">
    <property type="entry name" value="RNASE_H_2"/>
    <property type="match status" value="1"/>
</dbReference>
<feature type="chain" id="PRO_1000074919" description="Ribonuclease HII">
    <location>
        <begin position="1"/>
        <end position="202"/>
    </location>
</feature>
<feature type="domain" description="RNase H type-2" evidence="2">
    <location>
        <begin position="12"/>
        <end position="201"/>
    </location>
</feature>
<feature type="binding site" evidence="1">
    <location>
        <position position="18"/>
    </location>
    <ligand>
        <name>a divalent metal cation</name>
        <dbReference type="ChEBI" id="CHEBI:60240"/>
    </ligand>
</feature>
<feature type="binding site" evidence="1">
    <location>
        <position position="19"/>
    </location>
    <ligand>
        <name>a divalent metal cation</name>
        <dbReference type="ChEBI" id="CHEBI:60240"/>
    </ligand>
</feature>
<feature type="binding site" evidence="1">
    <location>
        <position position="110"/>
    </location>
    <ligand>
        <name>a divalent metal cation</name>
        <dbReference type="ChEBI" id="CHEBI:60240"/>
    </ligand>
</feature>
<gene>
    <name evidence="1" type="primary">rnhB</name>
    <name type="ordered locus">CBUD_1428</name>
</gene>
<sequence>MDAPFAKTPSNLLIAGVDEAGRGPLAGPVITAAVILNPEIIIEGLADSKKLSLKKREELYEKIITNCKAFAIARADVEEIDRLNIFRATLLAMQRAINQLSIQPDKVLIDGHCCPDLPYETQAIVQGDQNVPAISAASILAKVTRDREMLKYDAQYPDYGFAIHKGYGTKAHLAAIHRFGITPVHRKSFEPVRQLKLFIPEE</sequence>
<reference key="1">
    <citation type="journal article" date="2009" name="Infect. Immun.">
        <title>Comparative genomics reveal extensive transposon-mediated genomic plasticity and diversity among potential effector proteins within the genus Coxiella.</title>
        <authorList>
            <person name="Beare P.A."/>
            <person name="Unsworth N."/>
            <person name="Andoh M."/>
            <person name="Voth D.E."/>
            <person name="Omsland A."/>
            <person name="Gilk S.D."/>
            <person name="Williams K.P."/>
            <person name="Sobral B.W."/>
            <person name="Kupko J.J. III"/>
            <person name="Porcella S.F."/>
            <person name="Samuel J.E."/>
            <person name="Heinzen R.A."/>
        </authorList>
    </citation>
    <scope>NUCLEOTIDE SEQUENCE [LARGE SCALE GENOMIC DNA]</scope>
    <source>
        <strain>Dugway 5J108-111</strain>
    </source>
</reference>
<evidence type="ECO:0000255" key="1">
    <source>
        <dbReference type="HAMAP-Rule" id="MF_00052"/>
    </source>
</evidence>
<evidence type="ECO:0000255" key="2">
    <source>
        <dbReference type="PROSITE-ProRule" id="PRU01319"/>
    </source>
</evidence>
<protein>
    <recommendedName>
        <fullName evidence="1">Ribonuclease HII</fullName>
        <shortName evidence="1">RNase HII</shortName>
        <ecNumber evidence="1">3.1.26.4</ecNumber>
    </recommendedName>
</protein>
<comment type="function">
    <text evidence="1">Endonuclease that specifically degrades the RNA of RNA-DNA hybrids.</text>
</comment>
<comment type="catalytic activity">
    <reaction evidence="1">
        <text>Endonucleolytic cleavage to 5'-phosphomonoester.</text>
        <dbReference type="EC" id="3.1.26.4"/>
    </reaction>
</comment>
<comment type="cofactor">
    <cofactor evidence="1">
        <name>Mn(2+)</name>
        <dbReference type="ChEBI" id="CHEBI:29035"/>
    </cofactor>
    <cofactor evidence="1">
        <name>Mg(2+)</name>
        <dbReference type="ChEBI" id="CHEBI:18420"/>
    </cofactor>
    <text evidence="1">Manganese or magnesium. Binds 1 divalent metal ion per monomer in the absence of substrate. May bind a second metal ion after substrate binding.</text>
</comment>
<comment type="subcellular location">
    <subcellularLocation>
        <location evidence="1">Cytoplasm</location>
    </subcellularLocation>
</comment>
<comment type="similarity">
    <text evidence="1">Belongs to the RNase HII family.</text>
</comment>
<accession>A9KGD3</accession>